<gene>
    <name evidence="1" type="primary">mltC</name>
    <name type="ordered locus">plu1167</name>
</gene>
<keyword id="KW-0998">Cell outer membrane</keyword>
<keyword id="KW-0961">Cell wall biogenesis/degradation</keyword>
<keyword id="KW-0449">Lipoprotein</keyword>
<keyword id="KW-0456">Lyase</keyword>
<keyword id="KW-0472">Membrane</keyword>
<keyword id="KW-0564">Palmitate</keyword>
<keyword id="KW-1185">Reference proteome</keyword>
<keyword id="KW-0732">Signal</keyword>
<comment type="function">
    <text evidence="1">Murein-degrading enzyme. May play a role in recycling of muropeptides during cell elongation and/or cell division.</text>
</comment>
<comment type="catalytic activity">
    <reaction evidence="1">
        <text>Exolytic cleavage of the (1-&gt;4)-beta-glycosidic linkage between N-acetylmuramic acid (MurNAc) and N-acetylglucosamine (GlcNAc) residues in peptidoglycan, from either the reducing or the non-reducing ends of the peptidoglycan chains, with concomitant formation of a 1,6-anhydrobond in the MurNAc residue.</text>
        <dbReference type="EC" id="4.2.2.n1"/>
    </reaction>
</comment>
<comment type="subcellular location">
    <subcellularLocation>
        <location evidence="1">Cell outer membrane</location>
        <topology evidence="1">Lipid-anchor</topology>
    </subcellularLocation>
</comment>
<comment type="similarity">
    <text evidence="1">Belongs to the transglycosylase Slt family.</text>
</comment>
<name>MLTC_PHOLL</name>
<dbReference type="EC" id="4.2.2.n1" evidence="1"/>
<dbReference type="EMBL" id="BX571862">
    <property type="protein sequence ID" value="CAE13461.1"/>
    <property type="molecule type" value="Genomic_DNA"/>
</dbReference>
<dbReference type="RefSeq" id="WP_011145494.1">
    <property type="nucleotide sequence ID" value="NC_005126.1"/>
</dbReference>
<dbReference type="SMR" id="Q7N7I2"/>
<dbReference type="STRING" id="243265.plu1167"/>
<dbReference type="CAZy" id="GH23">
    <property type="family name" value="Glycoside Hydrolase Family 23"/>
</dbReference>
<dbReference type="GeneID" id="48847437"/>
<dbReference type="KEGG" id="plu:plu1167"/>
<dbReference type="eggNOG" id="COG0741">
    <property type="taxonomic scope" value="Bacteria"/>
</dbReference>
<dbReference type="HOGENOM" id="CLU_044583_0_0_6"/>
<dbReference type="OrthoDB" id="5620293at2"/>
<dbReference type="Proteomes" id="UP000002514">
    <property type="component" value="Chromosome"/>
</dbReference>
<dbReference type="GO" id="GO:0009279">
    <property type="term" value="C:cell outer membrane"/>
    <property type="evidence" value="ECO:0007669"/>
    <property type="project" value="UniProtKB-SubCell"/>
</dbReference>
<dbReference type="GO" id="GO:0016798">
    <property type="term" value="F:hydrolase activity, acting on glycosyl bonds"/>
    <property type="evidence" value="ECO:0007669"/>
    <property type="project" value="InterPro"/>
</dbReference>
<dbReference type="GO" id="GO:0008933">
    <property type="term" value="F:peptidoglycan lytic transglycosylase activity"/>
    <property type="evidence" value="ECO:0007669"/>
    <property type="project" value="UniProtKB-UniRule"/>
</dbReference>
<dbReference type="GO" id="GO:0016998">
    <property type="term" value="P:cell wall macromolecule catabolic process"/>
    <property type="evidence" value="ECO:0007669"/>
    <property type="project" value="UniProtKB-UniRule"/>
</dbReference>
<dbReference type="GO" id="GO:0071555">
    <property type="term" value="P:cell wall organization"/>
    <property type="evidence" value="ECO:0007669"/>
    <property type="project" value="UniProtKB-KW"/>
</dbReference>
<dbReference type="GO" id="GO:0000270">
    <property type="term" value="P:peptidoglycan metabolic process"/>
    <property type="evidence" value="ECO:0007669"/>
    <property type="project" value="InterPro"/>
</dbReference>
<dbReference type="CDD" id="cd16893">
    <property type="entry name" value="LT_MltC_MltE"/>
    <property type="match status" value="1"/>
</dbReference>
<dbReference type="FunFam" id="1.10.530.10:FF:000002">
    <property type="entry name" value="Membrane-bound lytic murein transglycosylase C"/>
    <property type="match status" value="1"/>
</dbReference>
<dbReference type="Gene3D" id="1.10.530.10">
    <property type="match status" value="1"/>
</dbReference>
<dbReference type="HAMAP" id="MF_01616">
    <property type="entry name" value="MltC"/>
    <property type="match status" value="1"/>
</dbReference>
<dbReference type="InterPro" id="IPR023346">
    <property type="entry name" value="Lysozyme-like_dom_sf"/>
</dbReference>
<dbReference type="InterPro" id="IPR023664">
    <property type="entry name" value="Murein_transglycosylaseC"/>
</dbReference>
<dbReference type="InterPro" id="IPR024570">
    <property type="entry name" value="Murein_transglycosylaseC_N"/>
</dbReference>
<dbReference type="InterPro" id="IPR000189">
    <property type="entry name" value="Transglyc_AS"/>
</dbReference>
<dbReference type="InterPro" id="IPR008258">
    <property type="entry name" value="Transglycosylase_SLT_dom_1"/>
</dbReference>
<dbReference type="NCBIfam" id="NF008670">
    <property type="entry name" value="PRK11671.1"/>
    <property type="match status" value="1"/>
</dbReference>
<dbReference type="PANTHER" id="PTHR37423:SF2">
    <property type="entry name" value="MEMBRANE-BOUND LYTIC MUREIN TRANSGLYCOSYLASE C"/>
    <property type="match status" value="1"/>
</dbReference>
<dbReference type="PANTHER" id="PTHR37423">
    <property type="entry name" value="SOLUBLE LYTIC MUREIN TRANSGLYCOSYLASE-RELATED"/>
    <property type="match status" value="1"/>
</dbReference>
<dbReference type="Pfam" id="PF11873">
    <property type="entry name" value="Mltc_N"/>
    <property type="match status" value="1"/>
</dbReference>
<dbReference type="Pfam" id="PF01464">
    <property type="entry name" value="SLT"/>
    <property type="match status" value="1"/>
</dbReference>
<dbReference type="SUPFAM" id="SSF53955">
    <property type="entry name" value="Lysozyme-like"/>
    <property type="match status" value="1"/>
</dbReference>
<dbReference type="PROSITE" id="PS51257">
    <property type="entry name" value="PROKAR_LIPOPROTEIN"/>
    <property type="match status" value="1"/>
</dbReference>
<dbReference type="PROSITE" id="PS00922">
    <property type="entry name" value="TRANSGLYCOSYLASE"/>
    <property type="match status" value="1"/>
</dbReference>
<evidence type="ECO:0000255" key="1">
    <source>
        <dbReference type="HAMAP-Rule" id="MF_01616"/>
    </source>
</evidence>
<protein>
    <recommendedName>
        <fullName evidence="1">Membrane-bound lytic murein transglycosylase C</fullName>
        <ecNumber evidence="1">4.2.2.n1</ecNumber>
    </recommendedName>
    <alternativeName>
        <fullName evidence="1">Murein lyase C</fullName>
    </alternativeName>
</protein>
<accession>Q7N7I2</accession>
<sequence>MKKLLALFVIAPILISCTSNKNSEYREEYIKDTNGFDILMGQFAHNIENIWGLHEVLIAGPKDYVKYTDQYRTRSHINFEAGTITIETISPIDPTTYLRKAIITTLLMGDDPGSVDLYSDTNDIQISKEPFLYGQVMDNNGQPIRWEWRATHFADYLIANKLQKRQSGLHVIWSVTIQLVPNHLDKRAHKYLPLIRQASIKYGIDESLILAIMQIESSFNPYAVSRSDALGLMQVVQHTAGRDVFKMKGKSGQPSRSYLFDPENNIDAGTAYLSILQNSYLVDITNATSRRYAVITAYNGGAGSVLRVFSSDKKKAAQIINKMAPGDVYETLTTKHPSAESRRYLMKVNTAQKGYHH</sequence>
<proteinExistence type="inferred from homology"/>
<reference key="1">
    <citation type="journal article" date="2003" name="Nat. Biotechnol.">
        <title>The genome sequence of the entomopathogenic bacterium Photorhabdus luminescens.</title>
        <authorList>
            <person name="Duchaud E."/>
            <person name="Rusniok C."/>
            <person name="Frangeul L."/>
            <person name="Buchrieser C."/>
            <person name="Givaudan A."/>
            <person name="Taourit S."/>
            <person name="Bocs S."/>
            <person name="Boursaux-Eude C."/>
            <person name="Chandler M."/>
            <person name="Charles J.-F."/>
            <person name="Dassa E."/>
            <person name="Derose R."/>
            <person name="Derzelle S."/>
            <person name="Freyssinet G."/>
            <person name="Gaudriault S."/>
            <person name="Medigue C."/>
            <person name="Lanois A."/>
            <person name="Powell K."/>
            <person name="Siguier P."/>
            <person name="Vincent R."/>
            <person name="Wingate V."/>
            <person name="Zouine M."/>
            <person name="Glaser P."/>
            <person name="Boemare N."/>
            <person name="Danchin A."/>
            <person name="Kunst F."/>
        </authorList>
    </citation>
    <scope>NUCLEOTIDE SEQUENCE [LARGE SCALE GENOMIC DNA]</scope>
    <source>
        <strain>DSM 15139 / CIP 105565 / TT01</strain>
    </source>
</reference>
<organism>
    <name type="scientific">Photorhabdus laumondii subsp. laumondii (strain DSM 15139 / CIP 105565 / TT01)</name>
    <name type="common">Photorhabdus luminescens subsp. laumondii</name>
    <dbReference type="NCBI Taxonomy" id="243265"/>
    <lineage>
        <taxon>Bacteria</taxon>
        <taxon>Pseudomonadati</taxon>
        <taxon>Pseudomonadota</taxon>
        <taxon>Gammaproteobacteria</taxon>
        <taxon>Enterobacterales</taxon>
        <taxon>Morganellaceae</taxon>
        <taxon>Photorhabdus</taxon>
    </lineage>
</organism>
<feature type="signal peptide" evidence="1">
    <location>
        <begin position="1"/>
        <end position="16"/>
    </location>
</feature>
<feature type="chain" id="PRO_0000032793" description="Membrane-bound lytic murein transglycosylase C">
    <location>
        <begin position="17"/>
        <end position="357"/>
    </location>
</feature>
<feature type="lipid moiety-binding region" description="N-palmitoyl cysteine" evidence="1">
    <location>
        <position position="17"/>
    </location>
</feature>
<feature type="lipid moiety-binding region" description="S-diacylglycerol cysteine" evidence="1">
    <location>
        <position position="17"/>
    </location>
</feature>